<sequence length="301" mass="34226">MRYFKEEVAGMKYGIYFAYWTKEWFADYKKYMDKVSALGFDVLEISCAALRDVYTTKEQLIELREYAKEKGLVLTAGYGPTKAENLCSEDPEAVRRAMTFFKDLLPKLQLMDIHILGGGLYSYWPVDFTINNDKQGDRARAVRNLRELSKTAEECDVVLGMEVLNRYEGYILNTCEEAIDFVDEIGSSHVKIMLDTFHMNIEETNMADAIRKAGDRLGHLHLGEQNRLVPGKGSLPWAEIGQALRDINYQGAAVMEPFVMQGGTIGSEIKVWRDMVPDLSEEALDRDAKGALEFCRHVFGI</sequence>
<accession>A8RG82</accession>
<comment type="function">
    <text evidence="3">Involved in the biosynthesis of D-psicose. Catalyzes the reversible epimerization of D-fructose at the C3 position to yield D-psicose. The enzyme is highly specific for D-psicose and shows very low activity with D-tagatose.</text>
</comment>
<comment type="catalytic activity">
    <reaction evidence="3">
        <text>D-allulose = keto-D-fructose</text>
        <dbReference type="Rhea" id="RHEA:42360"/>
        <dbReference type="ChEBI" id="CHEBI:27605"/>
        <dbReference type="ChEBI" id="CHEBI:48095"/>
        <dbReference type="EC" id="5.1.3.30"/>
    </reaction>
</comment>
<comment type="cofactor">
    <cofactor evidence="3">
        <name>Mn(2+)</name>
        <dbReference type="ChEBI" id="CHEBI:29035"/>
    </cofactor>
    <cofactor evidence="3">
        <name>Co(2+)</name>
        <dbReference type="ChEBI" id="CHEBI:48828"/>
    </cofactor>
    <text evidence="3">Binds 1 Mn(2+) or Co(2+) ion per subunit.</text>
</comment>
<comment type="activity regulation">
    <text evidence="3">Completely inhibited by EDTA and partially inhibited by Zn(2+), Mg(2+) and Cu(2+).</text>
</comment>
<comment type="biophysicochemical properties">
    <kinetics>
        <KM evidence="3">27.4 mM for D-psicose (at pH 7 and 55 degrees Celsius)</KM>
        <KM evidence="3">339 mM for D-tagatose (at pH 7 and 55 degrees Celsius)</KM>
        <text evidence="3">kcat is 49 sec(-1) for epimerase activity with D-psicose as substrate (at pH 7 and 55 degrees Celsius). kcat is 4.7 sec(-1) for epimerase activity with D-tagatose as substrate (at pH 7 and 55 degrees Celsius).</text>
    </kinetics>
    <phDependence>
        <text evidence="3">Optimum pH is 7.</text>
    </phDependence>
    <temperatureDependence>
        <text evidence="3">Optimum temperature is 55 degrees Celsius.</text>
    </temperatureDependence>
</comment>
<comment type="subunit">
    <text evidence="3">Homotetramer.</text>
</comment>
<comment type="similarity">
    <text evidence="5">Belongs to the hyi family.</text>
</comment>
<keyword id="KW-0170">Cobalt</keyword>
<keyword id="KW-0413">Isomerase</keyword>
<keyword id="KW-0464">Manganese</keyword>
<keyword id="KW-0479">Metal-binding</keyword>
<protein>
    <recommendedName>
        <fullName evidence="4">D-psicose 3-epimerase</fullName>
        <shortName evidence="4">DPEase</shortName>
        <ecNumber evidence="3">5.1.3.30</ecNumber>
    </recommendedName>
</protein>
<evidence type="ECO:0000250" key="1">
    <source>
        <dbReference type="UniProtKB" id="B8I944"/>
    </source>
</evidence>
<evidence type="ECO:0000250" key="2">
    <source>
        <dbReference type="UniProtKB" id="Q9WYP7"/>
    </source>
</evidence>
<evidence type="ECO:0000269" key="3">
    <source>
    </source>
</evidence>
<evidence type="ECO:0000303" key="4">
    <source>
    </source>
</evidence>
<evidence type="ECO:0000305" key="5"/>
<feature type="chain" id="PRO_0000435453" description="D-psicose 3-epimerase">
    <location>
        <begin position="1"/>
        <end position="301"/>
    </location>
</feature>
<feature type="active site" description="Proton donor/acceptor" evidence="2">
    <location>
        <position position="162"/>
    </location>
</feature>
<feature type="active site" description="Proton donor/acceptor" evidence="2">
    <location>
        <position position="256"/>
    </location>
</feature>
<feature type="binding site" evidence="1">
    <location>
        <position position="16"/>
    </location>
    <ligand>
        <name>substrate</name>
    </ligand>
</feature>
<feature type="binding site" evidence="1">
    <location>
        <position position="162"/>
    </location>
    <ligand>
        <name>Mn(2+)</name>
        <dbReference type="ChEBI" id="CHEBI:29035"/>
    </ligand>
</feature>
<feature type="binding site" evidence="1">
    <location>
        <position position="168"/>
    </location>
    <ligand>
        <name>substrate</name>
    </ligand>
</feature>
<feature type="binding site" evidence="1">
    <location>
        <begin position="195"/>
        <end position="198"/>
    </location>
    <ligand>
        <name>substrate</name>
    </ligand>
</feature>
<feature type="binding site" evidence="1">
    <location>
        <position position="195"/>
    </location>
    <ligand>
        <name>Mn(2+)</name>
        <dbReference type="ChEBI" id="CHEBI:29035"/>
    </ligand>
</feature>
<feature type="binding site" evidence="1">
    <location>
        <position position="221"/>
    </location>
    <ligand>
        <name>Mn(2+)</name>
        <dbReference type="ChEBI" id="CHEBI:29035"/>
    </ligand>
</feature>
<feature type="binding site" evidence="1">
    <location>
        <position position="227"/>
    </location>
    <ligand>
        <name>substrate</name>
    </ligand>
</feature>
<feature type="binding site" evidence="1">
    <location>
        <position position="256"/>
    </location>
    <ligand>
        <name>Mn(2+)</name>
        <dbReference type="ChEBI" id="CHEBI:29035"/>
    </ligand>
</feature>
<organism>
    <name type="scientific">Enterocloster bolteae (strain ATCC BAA-613 / DSM 15670 / CCUG 46953 / JCM 12243 / WAL 16351)</name>
    <name type="common">Clostridium bolteae</name>
    <dbReference type="NCBI Taxonomy" id="411902"/>
    <lineage>
        <taxon>Bacteria</taxon>
        <taxon>Bacillati</taxon>
        <taxon>Bacillota</taxon>
        <taxon>Clostridia</taxon>
        <taxon>Lachnospirales</taxon>
        <taxon>Lachnospiraceae</taxon>
        <taxon>Enterocloster</taxon>
    </lineage>
</organism>
<proteinExistence type="evidence at protein level"/>
<reference key="1">
    <citation type="submission" date="2007-09" db="EMBL/GenBank/DDBJ databases">
        <title>Draft genome sequence of Clostridium bolteae (ATCC BAA-613).</title>
        <authorList>
            <person name="Sudarsanam P."/>
            <person name="Ley R."/>
            <person name="Guruge J."/>
            <person name="Turnbaugh P.J."/>
            <person name="Mahowald M."/>
            <person name="Liep D."/>
            <person name="Gordon J."/>
        </authorList>
    </citation>
    <scope>NUCLEOTIDE SEQUENCE [LARGE SCALE GENOMIC DNA]</scope>
    <source>
        <strain>ATCC BAA-613 / DSM 15670 / CCUG 46953 / JCM 12243 / WAL 16351</strain>
    </source>
</reference>
<reference key="2">
    <citation type="journal article" date="2014" name="Appl. Microbiol. Biotechnol.">
        <title>A D-psicose 3-epimerase with neutral pH optimum from Clostridium bolteae for D-psicose production: cloning, expression, purification, and characterization.</title>
        <authorList>
            <person name="Jia M."/>
            <person name="Mu W."/>
            <person name="Chu F."/>
            <person name="Zhang X."/>
            <person name="Jiang B."/>
            <person name="Zhou L.L."/>
            <person name="Zhang T."/>
        </authorList>
    </citation>
    <scope>FUNCTION</scope>
    <scope>CATALYTIC ACTIVITY</scope>
    <scope>BIOPHYSICOCHEMICAL PROPERTIES</scope>
    <scope>ACTIVITY REGULATION</scope>
    <scope>COFACTOR</scope>
    <scope>SUBSTRATE SPECIFICITY</scope>
    <scope>SUBUNIT</scope>
    <source>
        <strain>ATCC BAA-613 / DSM 15670 / CCUG 46953 / JCM 12243 / WAL 16351</strain>
    </source>
</reference>
<name>DPES_ENTBW</name>
<gene>
    <name type="ORF">CLOBOL_00069</name>
</gene>
<dbReference type="EC" id="5.1.3.30" evidence="3"/>
<dbReference type="EMBL" id="ABCC02000001">
    <property type="protein sequence ID" value="EDP19602.1"/>
    <property type="molecule type" value="Genomic_DNA"/>
</dbReference>
<dbReference type="SMR" id="A8RG82"/>
<dbReference type="PaxDb" id="411902-CLOBOL_00069"/>
<dbReference type="KEGG" id="ag:EDP19602"/>
<dbReference type="eggNOG" id="COG1082">
    <property type="taxonomic scope" value="Bacteria"/>
</dbReference>
<dbReference type="HOGENOM" id="CLU_050006_8_2_9"/>
<dbReference type="BRENDA" id="5.1.3.30">
    <property type="organism ID" value="13725"/>
</dbReference>
<dbReference type="Proteomes" id="UP000005396">
    <property type="component" value="Unassembled WGS sequence"/>
</dbReference>
<dbReference type="GO" id="GO:0050897">
    <property type="term" value="F:cobalt ion binding"/>
    <property type="evidence" value="ECO:0000314"/>
    <property type="project" value="UniProtKB"/>
</dbReference>
<dbReference type="GO" id="GO:0030145">
    <property type="term" value="F:manganese ion binding"/>
    <property type="evidence" value="ECO:0000314"/>
    <property type="project" value="UniProtKB"/>
</dbReference>
<dbReference type="GO" id="GO:0016857">
    <property type="term" value="F:racemase and epimerase activity, acting on carbohydrates and derivatives"/>
    <property type="evidence" value="ECO:0000314"/>
    <property type="project" value="UniProtKB"/>
</dbReference>
<dbReference type="FunFam" id="3.20.20.150:FF:000022">
    <property type="entry name" value="D-psicose 3-epimerase"/>
    <property type="match status" value="1"/>
</dbReference>
<dbReference type="Gene3D" id="3.20.20.150">
    <property type="entry name" value="Divalent-metal-dependent TIM barrel enzymes"/>
    <property type="match status" value="1"/>
</dbReference>
<dbReference type="InterPro" id="IPR050312">
    <property type="entry name" value="IolE/XylAMocC-like"/>
</dbReference>
<dbReference type="InterPro" id="IPR036237">
    <property type="entry name" value="Xyl_isomerase-like_sf"/>
</dbReference>
<dbReference type="InterPro" id="IPR013022">
    <property type="entry name" value="Xyl_isomerase-like_TIM-brl"/>
</dbReference>
<dbReference type="PANTHER" id="PTHR12110">
    <property type="entry name" value="HYDROXYPYRUVATE ISOMERASE"/>
    <property type="match status" value="1"/>
</dbReference>
<dbReference type="PANTHER" id="PTHR12110:SF41">
    <property type="entry name" value="INOSOSE DEHYDRATASE"/>
    <property type="match status" value="1"/>
</dbReference>
<dbReference type="Pfam" id="PF01261">
    <property type="entry name" value="AP_endonuc_2"/>
    <property type="match status" value="1"/>
</dbReference>
<dbReference type="SUPFAM" id="SSF51658">
    <property type="entry name" value="Xylose isomerase-like"/>
    <property type="match status" value="1"/>
</dbReference>